<dbReference type="EMBL" id="L77117">
    <property type="protein sequence ID" value="AAB98505.1"/>
    <property type="molecule type" value="Genomic_DNA"/>
</dbReference>
<dbReference type="RefSeq" id="WP_010870019.1">
    <property type="nucleotide sequence ID" value="NC_000909.1"/>
</dbReference>
<dbReference type="SMR" id="Q57936"/>
<dbReference type="FunCoup" id="Q57936">
    <property type="interactions" value="73"/>
</dbReference>
<dbReference type="STRING" id="243232.MJ_0516"/>
<dbReference type="PaxDb" id="243232-MJ_0516"/>
<dbReference type="EnsemblBacteria" id="AAB98505">
    <property type="protein sequence ID" value="AAB98505"/>
    <property type="gene ID" value="MJ_0516"/>
</dbReference>
<dbReference type="GeneID" id="1451380"/>
<dbReference type="KEGG" id="mja:MJ_0516"/>
<dbReference type="eggNOG" id="arCOG01553">
    <property type="taxonomic scope" value="Archaea"/>
</dbReference>
<dbReference type="HOGENOM" id="CLU_055737_7_3_2"/>
<dbReference type="InParanoid" id="Q57936"/>
<dbReference type="OrthoDB" id="5740at2157"/>
<dbReference type="PhylomeDB" id="Q57936"/>
<dbReference type="BRENDA" id="2.7.1.78">
    <property type="organism ID" value="5244"/>
</dbReference>
<dbReference type="Proteomes" id="UP000000805">
    <property type="component" value="Chromosome"/>
</dbReference>
<dbReference type="GO" id="GO:0051539">
    <property type="term" value="F:4 iron, 4 sulfur cluster binding"/>
    <property type="evidence" value="ECO:0007669"/>
    <property type="project" value="UniProtKB-KW"/>
</dbReference>
<dbReference type="GO" id="GO:0046872">
    <property type="term" value="F:metal ion binding"/>
    <property type="evidence" value="ECO:0007669"/>
    <property type="project" value="UniProtKB-KW"/>
</dbReference>
<dbReference type="GO" id="GO:0008137">
    <property type="term" value="F:NADH dehydrogenase (ubiquinone) activity"/>
    <property type="evidence" value="ECO:0007669"/>
    <property type="project" value="InterPro"/>
</dbReference>
<dbReference type="GO" id="GO:0048038">
    <property type="term" value="F:quinone binding"/>
    <property type="evidence" value="ECO:0007669"/>
    <property type="project" value="InterPro"/>
</dbReference>
<dbReference type="Gene3D" id="3.40.50.12280">
    <property type="match status" value="1"/>
</dbReference>
<dbReference type="InterPro" id="IPR052375">
    <property type="entry name" value="Complex_I_20kDa-like"/>
</dbReference>
<dbReference type="InterPro" id="IPR006137">
    <property type="entry name" value="NADH_UbQ_OxRdtase-like_20kDa"/>
</dbReference>
<dbReference type="InterPro" id="IPR006138">
    <property type="entry name" value="NADH_UQ_OxRdtase_20Kd_su"/>
</dbReference>
<dbReference type="NCBIfam" id="NF005012">
    <property type="entry name" value="PRK06411.1"/>
    <property type="match status" value="1"/>
</dbReference>
<dbReference type="PANTHER" id="PTHR42989:SF1">
    <property type="entry name" value="FORMATE HYDROGENLYASE SUBUNIT 7-RELATED"/>
    <property type="match status" value="1"/>
</dbReference>
<dbReference type="PANTHER" id="PTHR42989">
    <property type="entry name" value="HYDROGENASE-4 COMPONENT I"/>
    <property type="match status" value="1"/>
</dbReference>
<dbReference type="Pfam" id="PF01058">
    <property type="entry name" value="Oxidored_q6"/>
    <property type="match status" value="1"/>
</dbReference>
<dbReference type="SUPFAM" id="SSF56770">
    <property type="entry name" value="HydA/Nqo6-like"/>
    <property type="match status" value="1"/>
</dbReference>
<dbReference type="PROSITE" id="PS01150">
    <property type="entry name" value="COMPLEX1_20K"/>
    <property type="match status" value="1"/>
</dbReference>
<organism>
    <name type="scientific">Methanocaldococcus jannaschii (strain ATCC 43067 / DSM 2661 / JAL-1 / JCM 10045 / NBRC 100440)</name>
    <name type="common">Methanococcus jannaschii</name>
    <dbReference type="NCBI Taxonomy" id="243232"/>
    <lineage>
        <taxon>Archaea</taxon>
        <taxon>Methanobacteriati</taxon>
        <taxon>Methanobacteriota</taxon>
        <taxon>Methanomada group</taxon>
        <taxon>Methanococci</taxon>
        <taxon>Methanococcales</taxon>
        <taxon>Methanocaldococcaceae</taxon>
        <taxon>Methanocaldococcus</taxon>
    </lineage>
</organism>
<proteinExistence type="inferred from homology"/>
<evidence type="ECO:0000255" key="1"/>
<evidence type="ECO:0000305" key="2"/>
<protein>
    <recommendedName>
        <fullName>Uncharacterized protein MJ0516</fullName>
    </recommendedName>
</protein>
<gene>
    <name type="ordered locus">MJ0516</name>
</gene>
<comment type="cofactor">
    <cofactor evidence="2">
        <name>[4Fe-4S] cluster</name>
        <dbReference type="ChEBI" id="CHEBI:49883"/>
    </cofactor>
    <text evidence="2">Binds 1 [4Fe-4S] cluster.</text>
</comment>
<comment type="similarity">
    <text evidence="2">Belongs to the complex I 20 kDa subunit family.</text>
</comment>
<sequence>MMKELFRKRSIHVCVVNTGGCNGCDIEIVACLAPRYDIEQYGIYVHNNPREADVLLVTGPVTLQWAERLKEIYEKTPEPKIVVAVGACALSGGIFKEGHVVGGVDKVIPVDAKIPGCPPRPSEIIETILKVAPKAIAMREKRLKNKDE</sequence>
<name>Y516_METJA</name>
<feature type="chain" id="PRO_0000118783" description="Uncharacterized protein MJ0516">
    <location>
        <begin position="1"/>
        <end position="148"/>
    </location>
</feature>
<feature type="binding site" evidence="1">
    <location>
        <position position="21"/>
    </location>
    <ligand>
        <name>[4Fe-4S] cluster</name>
        <dbReference type="ChEBI" id="CHEBI:49883"/>
    </ligand>
</feature>
<feature type="binding site" evidence="1">
    <location>
        <position position="24"/>
    </location>
    <ligand>
        <name>[4Fe-4S] cluster</name>
        <dbReference type="ChEBI" id="CHEBI:49883"/>
    </ligand>
</feature>
<feature type="binding site" evidence="1">
    <location>
        <position position="88"/>
    </location>
    <ligand>
        <name>[4Fe-4S] cluster</name>
        <dbReference type="ChEBI" id="CHEBI:49883"/>
    </ligand>
</feature>
<feature type="binding site" evidence="1">
    <location>
        <position position="117"/>
    </location>
    <ligand>
        <name>[4Fe-4S] cluster</name>
        <dbReference type="ChEBI" id="CHEBI:49883"/>
    </ligand>
</feature>
<accession>Q57936</accession>
<keyword id="KW-0004">4Fe-4S</keyword>
<keyword id="KW-0408">Iron</keyword>
<keyword id="KW-0411">Iron-sulfur</keyword>
<keyword id="KW-0479">Metal-binding</keyword>
<keyword id="KW-1185">Reference proteome</keyword>
<reference key="1">
    <citation type="journal article" date="1996" name="Science">
        <title>Complete genome sequence of the methanogenic archaeon, Methanococcus jannaschii.</title>
        <authorList>
            <person name="Bult C.J."/>
            <person name="White O."/>
            <person name="Olsen G.J."/>
            <person name="Zhou L."/>
            <person name="Fleischmann R.D."/>
            <person name="Sutton G.G."/>
            <person name="Blake J.A."/>
            <person name="FitzGerald L.M."/>
            <person name="Clayton R.A."/>
            <person name="Gocayne J.D."/>
            <person name="Kerlavage A.R."/>
            <person name="Dougherty B.A."/>
            <person name="Tomb J.-F."/>
            <person name="Adams M.D."/>
            <person name="Reich C.I."/>
            <person name="Overbeek R."/>
            <person name="Kirkness E.F."/>
            <person name="Weinstock K.G."/>
            <person name="Merrick J.M."/>
            <person name="Glodek A."/>
            <person name="Scott J.L."/>
            <person name="Geoghagen N.S.M."/>
            <person name="Weidman J.F."/>
            <person name="Fuhrmann J.L."/>
            <person name="Nguyen D."/>
            <person name="Utterback T.R."/>
            <person name="Kelley J.M."/>
            <person name="Peterson J.D."/>
            <person name="Sadow P.W."/>
            <person name="Hanna M.C."/>
            <person name="Cotton M.D."/>
            <person name="Roberts K.M."/>
            <person name="Hurst M.A."/>
            <person name="Kaine B.P."/>
            <person name="Borodovsky M."/>
            <person name="Klenk H.-P."/>
            <person name="Fraser C.M."/>
            <person name="Smith H.O."/>
            <person name="Woese C.R."/>
            <person name="Venter J.C."/>
        </authorList>
    </citation>
    <scope>NUCLEOTIDE SEQUENCE [LARGE SCALE GENOMIC DNA]</scope>
    <source>
        <strain>ATCC 43067 / DSM 2661 / JAL-1 / JCM 10045 / NBRC 100440</strain>
    </source>
</reference>